<keyword id="KW-0997">Cell inner membrane</keyword>
<keyword id="KW-1003">Cell membrane</keyword>
<keyword id="KW-0407">Ion channel</keyword>
<keyword id="KW-0406">Ion transport</keyword>
<keyword id="KW-0472">Membrane</keyword>
<keyword id="KW-0479">Metal-binding</keyword>
<keyword id="KW-1185">Reference proteome</keyword>
<keyword id="KW-0915">Sodium</keyword>
<keyword id="KW-0812">Transmembrane</keyword>
<keyword id="KW-1133">Transmembrane helix</keyword>
<keyword id="KW-0813">Transport</keyword>
<gene>
    <name evidence="1" type="primary">fluC</name>
    <name evidence="1" type="synonym">crcB</name>
    <name type="ordered locus">PMI0419</name>
</gene>
<evidence type="ECO:0000255" key="1">
    <source>
        <dbReference type="HAMAP-Rule" id="MF_00454"/>
    </source>
</evidence>
<dbReference type="EMBL" id="AM942759">
    <property type="protein sequence ID" value="CAR41048.1"/>
    <property type="molecule type" value="Genomic_DNA"/>
</dbReference>
<dbReference type="RefSeq" id="WP_004246058.1">
    <property type="nucleotide sequence ID" value="NC_010554.1"/>
</dbReference>
<dbReference type="SMR" id="B4EV00"/>
<dbReference type="EnsemblBacteria" id="CAR41048">
    <property type="protein sequence ID" value="CAR41048"/>
    <property type="gene ID" value="PMI0419"/>
</dbReference>
<dbReference type="GeneID" id="6800694"/>
<dbReference type="KEGG" id="pmr:PMI0419"/>
<dbReference type="eggNOG" id="COG0239">
    <property type="taxonomic scope" value="Bacteria"/>
</dbReference>
<dbReference type="HOGENOM" id="CLU_114342_3_3_6"/>
<dbReference type="Proteomes" id="UP000008319">
    <property type="component" value="Chromosome"/>
</dbReference>
<dbReference type="GO" id="GO:0005886">
    <property type="term" value="C:plasma membrane"/>
    <property type="evidence" value="ECO:0007669"/>
    <property type="project" value="UniProtKB-SubCell"/>
</dbReference>
<dbReference type="GO" id="GO:0062054">
    <property type="term" value="F:fluoride channel activity"/>
    <property type="evidence" value="ECO:0007669"/>
    <property type="project" value="UniProtKB-UniRule"/>
</dbReference>
<dbReference type="GO" id="GO:0046872">
    <property type="term" value="F:metal ion binding"/>
    <property type="evidence" value="ECO:0007669"/>
    <property type="project" value="UniProtKB-KW"/>
</dbReference>
<dbReference type="GO" id="GO:0140114">
    <property type="term" value="P:cellular detoxification of fluoride"/>
    <property type="evidence" value="ECO:0007669"/>
    <property type="project" value="UniProtKB-UniRule"/>
</dbReference>
<dbReference type="HAMAP" id="MF_00454">
    <property type="entry name" value="FluC"/>
    <property type="match status" value="1"/>
</dbReference>
<dbReference type="InterPro" id="IPR003691">
    <property type="entry name" value="FluC"/>
</dbReference>
<dbReference type="NCBIfam" id="TIGR00494">
    <property type="entry name" value="crcB"/>
    <property type="match status" value="1"/>
</dbReference>
<dbReference type="NCBIfam" id="NF010792">
    <property type="entry name" value="PRK14196.1"/>
    <property type="match status" value="1"/>
</dbReference>
<dbReference type="PANTHER" id="PTHR28259">
    <property type="entry name" value="FLUORIDE EXPORT PROTEIN 1-RELATED"/>
    <property type="match status" value="1"/>
</dbReference>
<dbReference type="PANTHER" id="PTHR28259:SF1">
    <property type="entry name" value="FLUORIDE EXPORT PROTEIN 1-RELATED"/>
    <property type="match status" value="1"/>
</dbReference>
<dbReference type="Pfam" id="PF02537">
    <property type="entry name" value="CRCB"/>
    <property type="match status" value="1"/>
</dbReference>
<reference key="1">
    <citation type="journal article" date="2008" name="J. Bacteriol.">
        <title>Complete genome sequence of uropathogenic Proteus mirabilis, a master of both adherence and motility.</title>
        <authorList>
            <person name="Pearson M.M."/>
            <person name="Sebaihia M."/>
            <person name="Churcher C."/>
            <person name="Quail M.A."/>
            <person name="Seshasayee A.S."/>
            <person name="Luscombe N.M."/>
            <person name="Abdellah Z."/>
            <person name="Arrosmith C."/>
            <person name="Atkin B."/>
            <person name="Chillingworth T."/>
            <person name="Hauser H."/>
            <person name="Jagels K."/>
            <person name="Moule S."/>
            <person name="Mungall K."/>
            <person name="Norbertczak H."/>
            <person name="Rabbinowitsch E."/>
            <person name="Walker D."/>
            <person name="Whithead S."/>
            <person name="Thomson N.R."/>
            <person name="Rather P.N."/>
            <person name="Parkhill J."/>
            <person name="Mobley H.L.T."/>
        </authorList>
    </citation>
    <scope>NUCLEOTIDE SEQUENCE [LARGE SCALE GENOMIC DNA]</scope>
    <source>
        <strain>HI4320</strain>
    </source>
</reference>
<feature type="chain" id="PRO_1000125144" description="Fluoride-specific ion channel FluC">
    <location>
        <begin position="1"/>
        <end position="124"/>
    </location>
</feature>
<feature type="transmembrane region" description="Helical" evidence="1">
    <location>
        <begin position="2"/>
        <end position="22"/>
    </location>
</feature>
<feature type="transmembrane region" description="Helical" evidence="1">
    <location>
        <begin position="35"/>
        <end position="55"/>
    </location>
</feature>
<feature type="transmembrane region" description="Helical" evidence="1">
    <location>
        <begin position="71"/>
        <end position="91"/>
    </location>
</feature>
<feature type="transmembrane region" description="Helical" evidence="1">
    <location>
        <begin position="100"/>
        <end position="120"/>
    </location>
</feature>
<feature type="binding site" evidence="1">
    <location>
        <position position="75"/>
    </location>
    <ligand>
        <name>Na(+)</name>
        <dbReference type="ChEBI" id="CHEBI:29101"/>
        <note>structural</note>
    </ligand>
</feature>
<feature type="binding site" evidence="1">
    <location>
        <position position="78"/>
    </location>
    <ligand>
        <name>Na(+)</name>
        <dbReference type="ChEBI" id="CHEBI:29101"/>
        <note>structural</note>
    </ligand>
</feature>
<sequence length="124" mass="13405">MLNIAIAVFIGGGLGSVLRWLISYRLNSLFPHFATGTLVANCIGAFIIAFGIAWFSKAPNIDPIWKIMLTTGFCGGLTTFSTFSVEVVALFNEGRIGWALGTMGANLAGSFLMTAFAFWLLREM</sequence>
<accession>B4EV00</accession>
<proteinExistence type="inferred from homology"/>
<protein>
    <recommendedName>
        <fullName evidence="1">Fluoride-specific ion channel FluC</fullName>
    </recommendedName>
</protein>
<comment type="function">
    <text evidence="1">Fluoride-specific ion channel. Important for reducing fluoride concentration in the cell, thus reducing its toxicity.</text>
</comment>
<comment type="catalytic activity">
    <reaction evidence="1">
        <text>fluoride(in) = fluoride(out)</text>
        <dbReference type="Rhea" id="RHEA:76159"/>
        <dbReference type="ChEBI" id="CHEBI:17051"/>
    </reaction>
    <physiologicalReaction direction="left-to-right" evidence="1">
        <dbReference type="Rhea" id="RHEA:76160"/>
    </physiologicalReaction>
</comment>
<comment type="activity regulation">
    <text evidence="1">Na(+) is not transported, but it plays an essential structural role and its presence is essential for fluoride channel function.</text>
</comment>
<comment type="subcellular location">
    <subcellularLocation>
        <location evidence="1">Cell inner membrane</location>
        <topology evidence="1">Multi-pass membrane protein</topology>
    </subcellularLocation>
</comment>
<comment type="similarity">
    <text evidence="1">Belongs to the fluoride channel Fluc/FEX (TC 1.A.43) family.</text>
</comment>
<organism>
    <name type="scientific">Proteus mirabilis (strain HI4320)</name>
    <dbReference type="NCBI Taxonomy" id="529507"/>
    <lineage>
        <taxon>Bacteria</taxon>
        <taxon>Pseudomonadati</taxon>
        <taxon>Pseudomonadota</taxon>
        <taxon>Gammaproteobacteria</taxon>
        <taxon>Enterobacterales</taxon>
        <taxon>Morganellaceae</taxon>
        <taxon>Proteus</taxon>
    </lineage>
</organism>
<name>FLUC_PROMH</name>